<keyword id="KW-0022">Alpha-amylase inhibitor</keyword>
<keyword id="KW-1015">Disulfide bond</keyword>
<keyword id="KW-0646">Protease inhibitor</keyword>
<keyword id="KW-0964">Secreted</keyword>
<keyword id="KW-0722">Serine protease inhibitor</keyword>
<keyword id="KW-0732">Signal</keyword>
<accession>P16969</accession>
<name>IAA_HORVU</name>
<organism>
    <name type="scientific">Hordeum vulgare</name>
    <name type="common">Barley</name>
    <dbReference type="NCBI Taxonomy" id="4513"/>
    <lineage>
        <taxon>Eukaryota</taxon>
        <taxon>Viridiplantae</taxon>
        <taxon>Streptophyta</taxon>
        <taxon>Embryophyta</taxon>
        <taxon>Tracheophyta</taxon>
        <taxon>Spermatophyta</taxon>
        <taxon>Magnoliopsida</taxon>
        <taxon>Liliopsida</taxon>
        <taxon>Poales</taxon>
        <taxon>Poaceae</taxon>
        <taxon>BOP clade</taxon>
        <taxon>Pooideae</taxon>
        <taxon>Triticodae</taxon>
        <taxon>Triticeae</taxon>
        <taxon>Hordeinae</taxon>
        <taxon>Hordeum</taxon>
    </lineage>
</organism>
<proteinExistence type="evidence at transcript level"/>
<reference key="1">
    <citation type="journal article" date="1988" name="FEBS Lett.">
        <title>Signal peptide homology between the sweet protein thaumatin II and unrelated cereal alpha-amylase/trypsin inhibitors.</title>
        <authorList>
            <person name="Lazaro A."/>
            <person name="Rodriguez-Palenzuela P."/>
            <person name="Marana C."/>
            <person name="Carbonero P."/>
            <person name="Garcia-Olmedo F."/>
        </authorList>
    </citation>
    <scope>NUCLEOTIDE SEQUENCE [MRNA]</scope>
    <source>
        <strain>cv. Bomi</strain>
        <tissue>Endosperm</tissue>
    </source>
</reference>
<sequence>MASDHRRFVLSGAVLLSVLAVAAATLESVKDECQLGVDFPHNPLATCHTYVIKRVCGRGPSRPMLVKERCCRELAAVPDHCRCEALRILMDGVRTPEGRVVEGRLGDRRDCPREEQRAFAATLVTAAECNLSSVQAPGVRLVLLADG</sequence>
<protein>
    <recommendedName>
        <fullName>Alpha-amylase/trypsin inhibitor</fullName>
    </recommendedName>
</protein>
<evidence type="ECO:0000305" key="1"/>
<comment type="function">
    <text>Alpha-amylase/trypsin inhibitor.</text>
</comment>
<comment type="subcellular location">
    <subcellularLocation>
        <location evidence="1">Secreted</location>
    </subcellularLocation>
</comment>
<comment type="tissue specificity">
    <text>Endosperm.</text>
</comment>
<comment type="PTM">
    <text evidence="1">Five disulfide bonds, which are essential for the inhibitor activity, are probably present.</text>
</comment>
<comment type="similarity">
    <text evidence="1">Belongs to the protease inhibitor I6 (cereal trypsin/alpha-amylase inhibitor) family.</text>
</comment>
<feature type="signal peptide">
    <location>
        <begin position="1"/>
        <end position="21"/>
    </location>
</feature>
<feature type="chain" id="PRO_0000014354" description="Alpha-amylase/trypsin inhibitor">
    <location>
        <begin position="22"/>
        <end position="147"/>
    </location>
</feature>
<dbReference type="EMBL" id="X13443">
    <property type="protein sequence ID" value="CAA31794.1"/>
    <property type="molecule type" value="mRNA"/>
</dbReference>
<dbReference type="PIR" id="S01655">
    <property type="entry name" value="S01655"/>
</dbReference>
<dbReference type="SMR" id="P16969"/>
<dbReference type="MEROPS" id="I06.002"/>
<dbReference type="GO" id="GO:0005576">
    <property type="term" value="C:extracellular region"/>
    <property type="evidence" value="ECO:0007669"/>
    <property type="project" value="UniProtKB-SubCell"/>
</dbReference>
<dbReference type="GO" id="GO:0015066">
    <property type="term" value="F:alpha-amylase inhibitor activity"/>
    <property type="evidence" value="ECO:0007669"/>
    <property type="project" value="UniProtKB-KW"/>
</dbReference>
<dbReference type="GO" id="GO:0004867">
    <property type="term" value="F:serine-type endopeptidase inhibitor activity"/>
    <property type="evidence" value="ECO:0007669"/>
    <property type="project" value="UniProtKB-KW"/>
</dbReference>
<dbReference type="CDD" id="cd00261">
    <property type="entry name" value="AAI_SS"/>
    <property type="match status" value="1"/>
</dbReference>
<dbReference type="Gene3D" id="1.10.110.10">
    <property type="entry name" value="Plant lipid-transfer and hydrophobic proteins"/>
    <property type="match status" value="1"/>
</dbReference>
<dbReference type="InterPro" id="IPR006106">
    <property type="entry name" value="Allergen/soft/tryp_amyl_inhib"/>
</dbReference>
<dbReference type="InterPro" id="IPR006105">
    <property type="entry name" value="Allergen/tryp_amyl_inhib_CS"/>
</dbReference>
<dbReference type="InterPro" id="IPR036312">
    <property type="entry name" value="Bifun_inhib/LTP/seed_sf"/>
</dbReference>
<dbReference type="InterPro" id="IPR016140">
    <property type="entry name" value="Bifunc_inhib/LTP/seed_store"/>
</dbReference>
<dbReference type="PANTHER" id="PTHR34481">
    <property type="entry name" value="TRYPSIN/FACTOR XIIA INHIBITOR-RELATED"/>
    <property type="match status" value="1"/>
</dbReference>
<dbReference type="PANTHER" id="PTHR34481:SF2">
    <property type="entry name" value="TRYPSIN_FACTOR XIIA INHIBITOR"/>
    <property type="match status" value="1"/>
</dbReference>
<dbReference type="Pfam" id="PF00234">
    <property type="entry name" value="Tryp_alpha_amyl"/>
    <property type="match status" value="1"/>
</dbReference>
<dbReference type="PRINTS" id="PR00808">
    <property type="entry name" value="AMLASEINHBTR"/>
</dbReference>
<dbReference type="SMART" id="SM00499">
    <property type="entry name" value="AAI"/>
    <property type="match status" value="1"/>
</dbReference>
<dbReference type="SUPFAM" id="SSF47699">
    <property type="entry name" value="Bifunctional inhibitor/lipid-transfer protein/seed storage 2S albumin"/>
    <property type="match status" value="1"/>
</dbReference>
<dbReference type="PROSITE" id="PS00426">
    <property type="entry name" value="CEREAL_TRYP_AMYL_INH"/>
    <property type="match status" value="1"/>
</dbReference>